<reference key="1">
    <citation type="submission" date="2007-03" db="EMBL/GenBank/DDBJ databases">
        <title>Sequence analysis of Arabidopsis pumila JS2 chloroplast DNA.</title>
        <authorList>
            <person name="Hosouchi T."/>
            <person name="Tsuruoka H."/>
            <person name="Kotani H."/>
        </authorList>
    </citation>
    <scope>NUCLEOTIDE SEQUENCE [LARGE SCALE GENOMIC DNA]</scope>
</reference>
<protein>
    <recommendedName>
        <fullName evidence="1">Potassium/proton antiporter CemA</fullName>
    </recommendedName>
    <alternativeName>
        <fullName evidence="1">Chloroplast envelope membrane protein A</fullName>
        <shortName evidence="1">CemA</shortName>
    </alternativeName>
</protein>
<accession>A4QJU5</accession>
<gene>
    <name evidence="1" type="primary">cemA</name>
    <name type="synonym">ycf10</name>
</gene>
<name>CEMA_OLIPU</name>
<organism>
    <name type="scientific">Olimarabidopsis pumila</name>
    <name type="common">Dwarf rocket</name>
    <name type="synonym">Arabidopsis griffithiana</name>
    <dbReference type="NCBI Taxonomy" id="74718"/>
    <lineage>
        <taxon>Eukaryota</taxon>
        <taxon>Viridiplantae</taxon>
        <taxon>Streptophyta</taxon>
        <taxon>Embryophyta</taxon>
        <taxon>Tracheophyta</taxon>
        <taxon>Spermatophyta</taxon>
        <taxon>Magnoliopsida</taxon>
        <taxon>eudicotyledons</taxon>
        <taxon>Gunneridae</taxon>
        <taxon>Pentapetalae</taxon>
        <taxon>rosids</taxon>
        <taxon>malvids</taxon>
        <taxon>Brassicales</taxon>
        <taxon>Brassicaceae</taxon>
        <taxon>Alyssopsideae</taxon>
        <taxon>Olimarabidopsis</taxon>
    </lineage>
</organism>
<sequence length="229" mass="27388">MAKKKAFIPFFYFTSIVFLPWLISLCCNKSLKTWITNWWNTRQCETFLNDIQEKSVLEKFIQLEELFQLDEMIKEYPETDLQQFRLGIHKETIQFIKIHNEYRIHTILHFSTNLISFVILSGYSFWGKEKLFILNSWVQEFLYNLSDTIKAFSILLLTDLCIGFHSPHGWELMIGYIYKDFGFAHYEQILSGLVSTFPVILDTIFKYWIFRYLNRVSPSLVVIYHAIND</sequence>
<geneLocation type="chloroplast"/>
<proteinExistence type="inferred from homology"/>
<feature type="chain" id="PRO_0000293524" description="Potassium/proton antiporter CemA">
    <location>
        <begin position="1"/>
        <end position="229"/>
    </location>
</feature>
<feature type="transmembrane region" description="Helical" evidence="1">
    <location>
        <begin position="6"/>
        <end position="26"/>
    </location>
</feature>
<feature type="transmembrane region" description="Helical" evidence="1">
    <location>
        <begin position="107"/>
        <end position="127"/>
    </location>
</feature>
<feature type="transmembrane region" description="Helical" evidence="1">
    <location>
        <begin position="189"/>
        <end position="209"/>
    </location>
</feature>
<keyword id="KW-0050">Antiport</keyword>
<keyword id="KW-0150">Chloroplast</keyword>
<keyword id="KW-0375">Hydrogen ion transport</keyword>
<keyword id="KW-0406">Ion transport</keyword>
<keyword id="KW-0472">Membrane</keyword>
<keyword id="KW-0934">Plastid</keyword>
<keyword id="KW-1001">Plastid inner membrane</keyword>
<keyword id="KW-0630">Potassium</keyword>
<keyword id="KW-0633">Potassium transport</keyword>
<keyword id="KW-0812">Transmembrane</keyword>
<keyword id="KW-1133">Transmembrane helix</keyword>
<keyword id="KW-0813">Transport</keyword>
<comment type="function">
    <text evidence="1">Contributes to K(+)/H(+) antiport activity by supporting proton efflux to control proton extrusion and homeostasis in chloroplasts in a light-dependent manner to modulate photosynthesis. Prevents excessive induction of non-photochemical quenching (NPQ) under continuous-light conditions. Indirectly promotes efficient inorganic carbon uptake into chloroplasts.</text>
</comment>
<comment type="catalytic activity">
    <reaction evidence="1">
        <text>K(+)(in) + H(+)(out) = K(+)(out) + H(+)(in)</text>
        <dbReference type="Rhea" id="RHEA:29467"/>
        <dbReference type="ChEBI" id="CHEBI:15378"/>
        <dbReference type="ChEBI" id="CHEBI:29103"/>
    </reaction>
</comment>
<comment type="subcellular location">
    <subcellularLocation>
        <location evidence="1">Plastid</location>
        <location evidence="1">Chloroplast inner membrane</location>
        <topology evidence="1">Multi-pass membrane protein</topology>
    </subcellularLocation>
</comment>
<comment type="similarity">
    <text evidence="1 2">Belongs to the CemA family.</text>
</comment>
<evidence type="ECO:0000255" key="1">
    <source>
        <dbReference type="HAMAP-Rule" id="MF_01308"/>
    </source>
</evidence>
<evidence type="ECO:0000305" key="2"/>
<dbReference type="EMBL" id="AP009368">
    <property type="protein sequence ID" value="BAF49951.1"/>
    <property type="molecule type" value="Genomic_DNA"/>
</dbReference>
<dbReference type="RefSeq" id="YP_001123127.1">
    <property type="nucleotide sequence ID" value="NC_009267.1"/>
</dbReference>
<dbReference type="SMR" id="A4QJU5"/>
<dbReference type="GeneID" id="4962473"/>
<dbReference type="GO" id="GO:0009706">
    <property type="term" value="C:chloroplast inner membrane"/>
    <property type="evidence" value="ECO:0007669"/>
    <property type="project" value="UniProtKB-SubCell"/>
</dbReference>
<dbReference type="GO" id="GO:0015297">
    <property type="term" value="F:antiporter activity"/>
    <property type="evidence" value="ECO:0007669"/>
    <property type="project" value="UniProtKB-KW"/>
</dbReference>
<dbReference type="GO" id="GO:0015078">
    <property type="term" value="F:proton transmembrane transporter activity"/>
    <property type="evidence" value="ECO:0007669"/>
    <property type="project" value="UniProtKB-UniRule"/>
</dbReference>
<dbReference type="GO" id="GO:0006813">
    <property type="term" value="P:potassium ion transport"/>
    <property type="evidence" value="ECO:0007669"/>
    <property type="project" value="UniProtKB-UniRule"/>
</dbReference>
<dbReference type="HAMAP" id="MF_01308">
    <property type="entry name" value="CemA_PxcA"/>
    <property type="match status" value="1"/>
</dbReference>
<dbReference type="InterPro" id="IPR004282">
    <property type="entry name" value="CemA"/>
</dbReference>
<dbReference type="PANTHER" id="PTHR33650:SF2">
    <property type="entry name" value="CHLOROPLAST ENVELOPE MEMBRANE PROTEIN"/>
    <property type="match status" value="1"/>
</dbReference>
<dbReference type="PANTHER" id="PTHR33650">
    <property type="entry name" value="CHLOROPLAST ENVELOPE MEMBRANE PROTEIN-RELATED"/>
    <property type="match status" value="1"/>
</dbReference>
<dbReference type="Pfam" id="PF03040">
    <property type="entry name" value="CemA"/>
    <property type="match status" value="1"/>
</dbReference>